<sequence length="236" mass="24520">MHVVVPFAADTPKTRLSEVLSPPERTALARAMLADVLSAITATGHVPTVLSTSPLSLENGCSCDDLPSTTPPGLESASDIPVTVDDRPLTAAVNAQLEAAEEPVAIVMADLALATPAALSTLFASGAADGVAIAPGRGGGTNALVVRHPDFRVDYHGASYLDHREHAAEIGAPLESVDSFRLGTDVDEPADLVEVLIHGRETAADGGESRTATRLRELGFELETTDGRVTVARDRS</sequence>
<keyword id="KW-0342">GTP-binding</keyword>
<keyword id="KW-0547">Nucleotide-binding</keyword>
<keyword id="KW-0548">Nucleotidyltransferase</keyword>
<keyword id="KW-1185">Reference proteome</keyword>
<keyword id="KW-0808">Transferase</keyword>
<gene>
    <name evidence="1" type="primary">cofC</name>
    <name type="ordered locus">Nmag_2631</name>
</gene>
<reference key="1">
    <citation type="journal article" date="2012" name="BMC Genomics">
        <title>A comparative genomics perspective on the genetic content of the alkaliphilic haloarchaeon Natrialba magadii ATCC 43099T.</title>
        <authorList>
            <person name="Siddaramappa S."/>
            <person name="Challacombe J.F."/>
            <person name="Decastro R.E."/>
            <person name="Pfeiffer F."/>
            <person name="Sastre D.E."/>
            <person name="Gimenez M.I."/>
            <person name="Paggi R.A."/>
            <person name="Detter J.C."/>
            <person name="Davenport K.W."/>
            <person name="Goodwin L.A."/>
            <person name="Kyrpides N."/>
            <person name="Tapia R."/>
            <person name="Pitluck S."/>
            <person name="Lucas S."/>
            <person name="Woyke T."/>
            <person name="Maupin-Furlow J.A."/>
        </authorList>
    </citation>
    <scope>NUCLEOTIDE SEQUENCE [LARGE SCALE GENOMIC DNA]</scope>
    <source>
        <strain>ATCC 43099 / DSM 3394 / CCM 3739 / CIP 104546 / IAM 13178 / JCM 8861 / NBRC 102185 / NCIMB 2190 / MS3</strain>
    </source>
</reference>
<reference key="2">
    <citation type="submission" date="2016-09" db="EMBL/GenBank/DDBJ databases">
        <authorList>
            <person name="Pfeiffer F."/>
        </authorList>
    </citation>
    <scope>SEQUENCE REVISION TO N-TERMINUS</scope>
</reference>
<feature type="chain" id="PRO_0000398761" description="2-phospho-L-lactate guanylyltransferase">
    <location>
        <begin position="1"/>
        <end position="236"/>
    </location>
</feature>
<protein>
    <recommendedName>
        <fullName evidence="1">2-phospho-L-lactate guanylyltransferase</fullName>
        <shortName evidence="1">LP guanylyltransferase</shortName>
        <ecNumber evidence="1">2.7.7.68</ecNumber>
    </recommendedName>
</protein>
<dbReference type="EC" id="2.7.7.68" evidence="1"/>
<dbReference type="EMBL" id="CP001932">
    <property type="protein sequence ID" value="ADD06190.2"/>
    <property type="molecule type" value="Genomic_DNA"/>
</dbReference>
<dbReference type="RefSeq" id="WP_004215145.1">
    <property type="nucleotide sequence ID" value="NC_013922.1"/>
</dbReference>
<dbReference type="SMR" id="D3SYZ8"/>
<dbReference type="STRING" id="547559.Nmag_2631"/>
<dbReference type="PaxDb" id="547559-Nmag_2631"/>
<dbReference type="GeneID" id="8825486"/>
<dbReference type="KEGG" id="nmg:Nmag_2631"/>
<dbReference type="eggNOG" id="arCOG04472">
    <property type="taxonomic scope" value="Archaea"/>
</dbReference>
<dbReference type="HOGENOM" id="CLU_076569_2_0_2"/>
<dbReference type="OrthoDB" id="11179at2157"/>
<dbReference type="UniPathway" id="UPA00071"/>
<dbReference type="Proteomes" id="UP000001879">
    <property type="component" value="Chromosome"/>
</dbReference>
<dbReference type="GO" id="GO:0005525">
    <property type="term" value="F:GTP binding"/>
    <property type="evidence" value="ECO:0007669"/>
    <property type="project" value="UniProtKB-KW"/>
</dbReference>
<dbReference type="GO" id="GO:0043814">
    <property type="term" value="F:phospholactate guanylyltransferase activity"/>
    <property type="evidence" value="ECO:0007669"/>
    <property type="project" value="UniProtKB-EC"/>
</dbReference>
<dbReference type="GO" id="GO:0052645">
    <property type="term" value="P:F420-0 metabolic process"/>
    <property type="evidence" value="ECO:0007669"/>
    <property type="project" value="UniProtKB-UniRule"/>
</dbReference>
<dbReference type="Gene3D" id="6.10.140.50">
    <property type="match status" value="1"/>
</dbReference>
<dbReference type="Gene3D" id="3.90.550.10">
    <property type="entry name" value="Spore Coat Polysaccharide Biosynthesis Protein SpsA, Chain A"/>
    <property type="match status" value="1"/>
</dbReference>
<dbReference type="HAMAP" id="MF_02114">
    <property type="entry name" value="CofC"/>
    <property type="match status" value="1"/>
</dbReference>
<dbReference type="InterPro" id="IPR002835">
    <property type="entry name" value="CofC"/>
</dbReference>
<dbReference type="InterPro" id="IPR029044">
    <property type="entry name" value="Nucleotide-diphossugar_trans"/>
</dbReference>
<dbReference type="NCBIfam" id="TIGR03552">
    <property type="entry name" value="F420_cofC"/>
    <property type="match status" value="1"/>
</dbReference>
<dbReference type="PANTHER" id="PTHR40392">
    <property type="entry name" value="2-PHOSPHO-L-LACTATE GUANYLYLTRANSFERASE"/>
    <property type="match status" value="1"/>
</dbReference>
<dbReference type="PANTHER" id="PTHR40392:SF1">
    <property type="entry name" value="2-PHOSPHO-L-LACTATE GUANYLYLTRANSFERASE"/>
    <property type="match status" value="1"/>
</dbReference>
<dbReference type="Pfam" id="PF01983">
    <property type="entry name" value="CofC"/>
    <property type="match status" value="2"/>
</dbReference>
<dbReference type="SUPFAM" id="SSF53448">
    <property type="entry name" value="Nucleotide-diphospho-sugar transferases"/>
    <property type="match status" value="1"/>
</dbReference>
<evidence type="ECO:0000255" key="1">
    <source>
        <dbReference type="HAMAP-Rule" id="MF_02114"/>
    </source>
</evidence>
<accession>D3SYZ8</accession>
<organism>
    <name type="scientific">Natrialba magadii (strain ATCC 43099 / DSM 3394 / CCM 3739 / CIP 104546 / IAM 13178 / JCM 8861 / NBRC 102185 / NCIMB 2190 / MS3)</name>
    <name type="common">Natronobacterium magadii</name>
    <dbReference type="NCBI Taxonomy" id="547559"/>
    <lineage>
        <taxon>Archaea</taxon>
        <taxon>Methanobacteriati</taxon>
        <taxon>Methanobacteriota</taxon>
        <taxon>Stenosarchaea group</taxon>
        <taxon>Halobacteria</taxon>
        <taxon>Halobacteriales</taxon>
        <taxon>Natrialbaceae</taxon>
        <taxon>Natrialba</taxon>
    </lineage>
</organism>
<name>COFC_NATMM</name>
<comment type="function">
    <text evidence="1">Guanylyltransferase that catalyzes the activation of (2S)-2-phospholactate (2-PL) as (2S)-lactyl-2-diphospho-5'-guanosine, via the condensation of 2-PL with GTP. It is involved in the biosynthesis of coenzyme F420, a hydride carrier cofactor.</text>
</comment>
<comment type="catalytic activity">
    <reaction evidence="1">
        <text>(2S)-2-phospholactate + GTP + H(+) = (2S)-lactyl-2-diphospho-5'-guanosine + diphosphate</text>
        <dbReference type="Rhea" id="RHEA:63424"/>
        <dbReference type="ChEBI" id="CHEBI:15378"/>
        <dbReference type="ChEBI" id="CHEBI:33019"/>
        <dbReference type="ChEBI" id="CHEBI:37565"/>
        <dbReference type="ChEBI" id="CHEBI:59435"/>
        <dbReference type="ChEBI" id="CHEBI:59906"/>
        <dbReference type="EC" id="2.7.7.68"/>
    </reaction>
</comment>
<comment type="pathway">
    <text evidence="1">Cofactor biosynthesis; coenzyme F420 biosynthesis.</text>
</comment>
<comment type="subunit">
    <text evidence="1">Homodimer.</text>
</comment>
<comment type="similarity">
    <text evidence="1">Belongs to the CofC family.</text>
</comment>
<proteinExistence type="inferred from homology"/>